<feature type="chain" id="PRO_1000076672" description="Uracil-DNA glycosylase">
    <location>
        <begin position="1"/>
        <end position="221"/>
    </location>
</feature>
<feature type="active site" description="Proton acceptor" evidence="1">
    <location>
        <position position="65"/>
    </location>
</feature>
<name>UNG_FLAJ1</name>
<protein>
    <recommendedName>
        <fullName evidence="1">Uracil-DNA glycosylase</fullName>
        <shortName evidence="1">UDG</shortName>
        <ecNumber evidence="1">3.2.2.27</ecNumber>
    </recommendedName>
</protein>
<reference key="1">
    <citation type="journal article" date="2009" name="Appl. Environ. Microbiol.">
        <title>Novel features of the polysaccharide-digesting gliding bacterium Flavobacterium johnsoniae as revealed by genome sequence analysis.</title>
        <authorList>
            <person name="McBride M.J."/>
            <person name="Xie G."/>
            <person name="Martens E.C."/>
            <person name="Lapidus A."/>
            <person name="Henrissat B."/>
            <person name="Rhodes R.G."/>
            <person name="Goltsman E."/>
            <person name="Wang W."/>
            <person name="Xu J."/>
            <person name="Hunnicutt D.W."/>
            <person name="Staroscik A.M."/>
            <person name="Hoover T.R."/>
            <person name="Cheng Y.Q."/>
            <person name="Stein J.L."/>
        </authorList>
    </citation>
    <scope>NUCLEOTIDE SEQUENCE [LARGE SCALE GENOMIC DNA]</scope>
    <source>
        <strain>ATCC 17061 / DSM 2064 / JCM 8514 / BCRC 14874 / CCUG 350202 / NBRC 14942 / NCIMB 11054 / UW101</strain>
    </source>
</reference>
<gene>
    <name evidence="1" type="primary">ung</name>
    <name type="ordered locus">Fjoh_2912</name>
</gene>
<dbReference type="EC" id="3.2.2.27" evidence="1"/>
<dbReference type="EMBL" id="CP000685">
    <property type="protein sequence ID" value="ABQ05933.1"/>
    <property type="molecule type" value="Genomic_DNA"/>
</dbReference>
<dbReference type="RefSeq" id="WP_012024971.1">
    <property type="nucleotide sequence ID" value="NC_009441.1"/>
</dbReference>
<dbReference type="SMR" id="A5FFT1"/>
<dbReference type="STRING" id="376686.Fjoh_2912"/>
<dbReference type="KEGG" id="fjo:Fjoh_2912"/>
<dbReference type="eggNOG" id="COG0692">
    <property type="taxonomic scope" value="Bacteria"/>
</dbReference>
<dbReference type="HOGENOM" id="CLU_032162_3_0_10"/>
<dbReference type="OrthoDB" id="9804372at2"/>
<dbReference type="Proteomes" id="UP000006694">
    <property type="component" value="Chromosome"/>
</dbReference>
<dbReference type="GO" id="GO:0005737">
    <property type="term" value="C:cytoplasm"/>
    <property type="evidence" value="ECO:0007669"/>
    <property type="project" value="UniProtKB-SubCell"/>
</dbReference>
<dbReference type="GO" id="GO:0004844">
    <property type="term" value="F:uracil DNA N-glycosylase activity"/>
    <property type="evidence" value="ECO:0007669"/>
    <property type="project" value="UniProtKB-UniRule"/>
</dbReference>
<dbReference type="GO" id="GO:0097510">
    <property type="term" value="P:base-excision repair, AP site formation via deaminated base removal"/>
    <property type="evidence" value="ECO:0007669"/>
    <property type="project" value="TreeGrafter"/>
</dbReference>
<dbReference type="CDD" id="cd10027">
    <property type="entry name" value="UDG-F1-like"/>
    <property type="match status" value="1"/>
</dbReference>
<dbReference type="FunFam" id="3.40.470.10:FF:000001">
    <property type="entry name" value="Uracil-DNA glycosylase"/>
    <property type="match status" value="1"/>
</dbReference>
<dbReference type="Gene3D" id="3.40.470.10">
    <property type="entry name" value="Uracil-DNA glycosylase-like domain"/>
    <property type="match status" value="1"/>
</dbReference>
<dbReference type="HAMAP" id="MF_00148">
    <property type="entry name" value="UDG"/>
    <property type="match status" value="1"/>
</dbReference>
<dbReference type="InterPro" id="IPR002043">
    <property type="entry name" value="UDG_fam1"/>
</dbReference>
<dbReference type="InterPro" id="IPR018085">
    <property type="entry name" value="Ura-DNA_Glyclase_AS"/>
</dbReference>
<dbReference type="InterPro" id="IPR005122">
    <property type="entry name" value="Uracil-DNA_glycosylase-like"/>
</dbReference>
<dbReference type="InterPro" id="IPR036895">
    <property type="entry name" value="Uracil-DNA_glycosylase-like_sf"/>
</dbReference>
<dbReference type="NCBIfam" id="NF003588">
    <property type="entry name" value="PRK05254.1-1"/>
    <property type="match status" value="1"/>
</dbReference>
<dbReference type="NCBIfam" id="NF003589">
    <property type="entry name" value="PRK05254.1-2"/>
    <property type="match status" value="1"/>
</dbReference>
<dbReference type="NCBIfam" id="NF003591">
    <property type="entry name" value="PRK05254.1-4"/>
    <property type="match status" value="1"/>
</dbReference>
<dbReference type="NCBIfam" id="NF003592">
    <property type="entry name" value="PRK05254.1-5"/>
    <property type="match status" value="1"/>
</dbReference>
<dbReference type="NCBIfam" id="TIGR00628">
    <property type="entry name" value="ung"/>
    <property type="match status" value="1"/>
</dbReference>
<dbReference type="PANTHER" id="PTHR11264">
    <property type="entry name" value="URACIL-DNA GLYCOSYLASE"/>
    <property type="match status" value="1"/>
</dbReference>
<dbReference type="PANTHER" id="PTHR11264:SF0">
    <property type="entry name" value="URACIL-DNA GLYCOSYLASE"/>
    <property type="match status" value="1"/>
</dbReference>
<dbReference type="Pfam" id="PF03167">
    <property type="entry name" value="UDG"/>
    <property type="match status" value="1"/>
</dbReference>
<dbReference type="SMART" id="SM00986">
    <property type="entry name" value="UDG"/>
    <property type="match status" value="1"/>
</dbReference>
<dbReference type="SMART" id="SM00987">
    <property type="entry name" value="UreE_C"/>
    <property type="match status" value="1"/>
</dbReference>
<dbReference type="SUPFAM" id="SSF52141">
    <property type="entry name" value="Uracil-DNA glycosylase-like"/>
    <property type="match status" value="1"/>
</dbReference>
<dbReference type="PROSITE" id="PS00130">
    <property type="entry name" value="U_DNA_GLYCOSYLASE"/>
    <property type="match status" value="1"/>
</dbReference>
<evidence type="ECO:0000255" key="1">
    <source>
        <dbReference type="HAMAP-Rule" id="MF_00148"/>
    </source>
</evidence>
<proteinExistence type="inferred from homology"/>
<comment type="function">
    <text evidence="1">Excises uracil residues from the DNA which can arise as a result of misincorporation of dUMP residues by DNA polymerase or due to deamination of cytosine.</text>
</comment>
<comment type="catalytic activity">
    <reaction evidence="1">
        <text>Hydrolyzes single-stranded DNA or mismatched double-stranded DNA and polynucleotides, releasing free uracil.</text>
        <dbReference type="EC" id="3.2.2.27"/>
    </reaction>
</comment>
<comment type="subcellular location">
    <subcellularLocation>
        <location evidence="1">Cytoplasm</location>
    </subcellularLocation>
</comment>
<comment type="similarity">
    <text evidence="1">Belongs to the uracil-DNA glycosylase (UDG) superfamily. UNG family.</text>
</comment>
<accession>A5FFT1</accession>
<keyword id="KW-0963">Cytoplasm</keyword>
<keyword id="KW-0227">DNA damage</keyword>
<keyword id="KW-0234">DNA repair</keyword>
<keyword id="KW-0378">Hydrolase</keyword>
<sequence length="221" mass="24984">MDVKMHSSWKPILNEEFQKPYFSELISFVKSEYTTKVCYPKGNQIFSAFDHCHFDEVKVVIIGQDPYHGPNQANGLCFSVNDGIPFPPSLHNIFKEIETDLGKPMPSTGNLERWADQGVFLLNATLTVRQSEAGSHQGKGWEKFTDAVIKQISAEKENVVFLLWGGFAQKKAALIDSSKHHILKSGHPSPLSANRGFWFGNKHFSQTNDFLKSKGLKQIEW</sequence>
<organism>
    <name type="scientific">Flavobacterium johnsoniae (strain ATCC 17061 / DSM 2064 / JCM 8514 / BCRC 14874 / CCUG 350202 / NBRC 14942 / NCIMB 11054 / UW101)</name>
    <name type="common">Cytophaga johnsonae</name>
    <dbReference type="NCBI Taxonomy" id="376686"/>
    <lineage>
        <taxon>Bacteria</taxon>
        <taxon>Pseudomonadati</taxon>
        <taxon>Bacteroidota</taxon>
        <taxon>Flavobacteriia</taxon>
        <taxon>Flavobacteriales</taxon>
        <taxon>Flavobacteriaceae</taxon>
        <taxon>Flavobacterium</taxon>
    </lineage>
</organism>